<accession>B7GNE0</accession>
<accession>E8MN84</accession>
<proteinExistence type="inferred from homology"/>
<comment type="function">
    <text evidence="1">One of the primary rRNA binding proteins, it binds directly near the 3'-end of the 23S rRNA, where it nucleates assembly of the 50S subunit.</text>
</comment>
<comment type="subunit">
    <text evidence="1">Part of the 50S ribosomal subunit. Forms a cluster with proteins L14 and L19.</text>
</comment>
<comment type="similarity">
    <text evidence="1">Belongs to the universal ribosomal protein uL3 family.</text>
</comment>
<dbReference type="EMBL" id="CP001095">
    <property type="protein sequence ID" value="ACJ53296.1"/>
    <property type="molecule type" value="Genomic_DNA"/>
</dbReference>
<dbReference type="EMBL" id="AP010889">
    <property type="protein sequence ID" value="BAJ69887.1"/>
    <property type="molecule type" value="Genomic_DNA"/>
</dbReference>
<dbReference type="RefSeq" id="WP_012578473.1">
    <property type="nucleotide sequence ID" value="NC_011593.1"/>
</dbReference>
<dbReference type="SMR" id="B7GNE0"/>
<dbReference type="KEGG" id="bln:Blon_2237"/>
<dbReference type="KEGG" id="blon:BLIJ_2310"/>
<dbReference type="PATRIC" id="fig|391904.8.peg.2312"/>
<dbReference type="HOGENOM" id="CLU_044142_4_1_11"/>
<dbReference type="Proteomes" id="UP000001360">
    <property type="component" value="Chromosome"/>
</dbReference>
<dbReference type="GO" id="GO:0022625">
    <property type="term" value="C:cytosolic large ribosomal subunit"/>
    <property type="evidence" value="ECO:0007669"/>
    <property type="project" value="TreeGrafter"/>
</dbReference>
<dbReference type="GO" id="GO:0019843">
    <property type="term" value="F:rRNA binding"/>
    <property type="evidence" value="ECO:0007669"/>
    <property type="project" value="UniProtKB-UniRule"/>
</dbReference>
<dbReference type="GO" id="GO:0003735">
    <property type="term" value="F:structural constituent of ribosome"/>
    <property type="evidence" value="ECO:0007669"/>
    <property type="project" value="InterPro"/>
</dbReference>
<dbReference type="GO" id="GO:0006412">
    <property type="term" value="P:translation"/>
    <property type="evidence" value="ECO:0007669"/>
    <property type="project" value="UniProtKB-UniRule"/>
</dbReference>
<dbReference type="FunFam" id="2.40.30.10:FF:000004">
    <property type="entry name" value="50S ribosomal protein L3"/>
    <property type="match status" value="1"/>
</dbReference>
<dbReference type="FunFam" id="3.30.160.810:FF:000001">
    <property type="entry name" value="50S ribosomal protein L3"/>
    <property type="match status" value="1"/>
</dbReference>
<dbReference type="Gene3D" id="3.30.160.810">
    <property type="match status" value="1"/>
</dbReference>
<dbReference type="Gene3D" id="2.40.30.10">
    <property type="entry name" value="Translation factors"/>
    <property type="match status" value="1"/>
</dbReference>
<dbReference type="HAMAP" id="MF_01325_B">
    <property type="entry name" value="Ribosomal_uL3_B"/>
    <property type="match status" value="1"/>
</dbReference>
<dbReference type="InterPro" id="IPR000597">
    <property type="entry name" value="Ribosomal_uL3"/>
</dbReference>
<dbReference type="InterPro" id="IPR019927">
    <property type="entry name" value="Ribosomal_uL3_bac/org-type"/>
</dbReference>
<dbReference type="InterPro" id="IPR019926">
    <property type="entry name" value="Ribosomal_uL3_CS"/>
</dbReference>
<dbReference type="InterPro" id="IPR009000">
    <property type="entry name" value="Transl_B-barrel_sf"/>
</dbReference>
<dbReference type="NCBIfam" id="TIGR03625">
    <property type="entry name" value="L3_bact"/>
    <property type="match status" value="1"/>
</dbReference>
<dbReference type="PANTHER" id="PTHR11229">
    <property type="entry name" value="50S RIBOSOMAL PROTEIN L3"/>
    <property type="match status" value="1"/>
</dbReference>
<dbReference type="PANTHER" id="PTHR11229:SF16">
    <property type="entry name" value="LARGE RIBOSOMAL SUBUNIT PROTEIN UL3C"/>
    <property type="match status" value="1"/>
</dbReference>
<dbReference type="Pfam" id="PF00297">
    <property type="entry name" value="Ribosomal_L3"/>
    <property type="match status" value="1"/>
</dbReference>
<dbReference type="SUPFAM" id="SSF50447">
    <property type="entry name" value="Translation proteins"/>
    <property type="match status" value="1"/>
</dbReference>
<dbReference type="PROSITE" id="PS00474">
    <property type="entry name" value="RIBOSOMAL_L3"/>
    <property type="match status" value="1"/>
</dbReference>
<name>RL3_BIFLS</name>
<evidence type="ECO:0000255" key="1">
    <source>
        <dbReference type="HAMAP-Rule" id="MF_01325"/>
    </source>
</evidence>
<evidence type="ECO:0000305" key="2"/>
<gene>
    <name evidence="1" type="primary">rplC</name>
    <name type="ordered locus">Blon_2237</name>
    <name type="ordered locus">BLIJ_2310</name>
</gene>
<sequence length="213" mass="22627">MSNRKALLGKKLGMSQVWDENGFFVPVTLVDVSTNVVTAVKTEESDGYKAVQLGYGAIDPTKVTKPLAGHFAKAGVTPRRHLVEVRTDDVDQFEAGQELAADLFEEGAEVDVTGTTKGKGFAGTIKRWGFKSYRRTHGSHKNERRPGSVGACATPSRILKGKRMAGRMGHVTATTQNLIIVSADVENGILAIKGAIPGPKGGIVLVRSAVKGA</sequence>
<reference key="1">
    <citation type="journal article" date="2008" name="Proc. Natl. Acad. Sci. U.S.A.">
        <title>The genome sequence of Bifidobacterium longum subsp. infantis reveals adaptations for milk utilization within the infant microbiome.</title>
        <authorList>
            <person name="Sela D.A."/>
            <person name="Chapman J."/>
            <person name="Adeuya A."/>
            <person name="Kim J.H."/>
            <person name="Chen F."/>
            <person name="Whitehead T.R."/>
            <person name="Lapidus A."/>
            <person name="Rokhsar D.S."/>
            <person name="Lebrilla C.B."/>
            <person name="German J.B."/>
            <person name="Price N.P."/>
            <person name="Richardson P.M."/>
            <person name="Mills D.A."/>
        </authorList>
    </citation>
    <scope>NUCLEOTIDE SEQUENCE [LARGE SCALE GENOMIC DNA]</scope>
    <source>
        <strain>ATCC 15697 / DSM 20088 / JCM 1222 / NCTC 11817 / S12</strain>
    </source>
</reference>
<reference key="2">
    <citation type="journal article" date="2011" name="Nature">
        <title>Bifidobacteria can protect from enteropathogenic infection through production of acetate.</title>
        <authorList>
            <person name="Fukuda S."/>
            <person name="Toh H."/>
            <person name="Hase K."/>
            <person name="Oshima K."/>
            <person name="Nakanishi Y."/>
            <person name="Yoshimura K."/>
            <person name="Tobe T."/>
            <person name="Clarke J.M."/>
            <person name="Topping D.L."/>
            <person name="Suzuki T."/>
            <person name="Taylor T.D."/>
            <person name="Itoh K."/>
            <person name="Kikuchi J."/>
            <person name="Morita H."/>
            <person name="Hattori M."/>
            <person name="Ohno H."/>
        </authorList>
    </citation>
    <scope>NUCLEOTIDE SEQUENCE [LARGE SCALE GENOMIC DNA]</scope>
    <source>
        <strain>ATCC 15697 / DSM 20088 / JCM 1222 / NCTC 11817 / S12</strain>
    </source>
</reference>
<feature type="chain" id="PRO_1000165868" description="Large ribosomal subunit protein uL3">
    <location>
        <begin position="1"/>
        <end position="213"/>
    </location>
</feature>
<protein>
    <recommendedName>
        <fullName evidence="1">Large ribosomal subunit protein uL3</fullName>
    </recommendedName>
    <alternativeName>
        <fullName evidence="2">50S ribosomal protein L3</fullName>
    </alternativeName>
</protein>
<keyword id="KW-0687">Ribonucleoprotein</keyword>
<keyword id="KW-0689">Ribosomal protein</keyword>
<keyword id="KW-0694">RNA-binding</keyword>
<keyword id="KW-0699">rRNA-binding</keyword>
<organism>
    <name type="scientific">Bifidobacterium longum subsp. infantis (strain ATCC 15697 / DSM 20088 / JCM 1222 / NCTC 11817 / S12)</name>
    <dbReference type="NCBI Taxonomy" id="391904"/>
    <lineage>
        <taxon>Bacteria</taxon>
        <taxon>Bacillati</taxon>
        <taxon>Actinomycetota</taxon>
        <taxon>Actinomycetes</taxon>
        <taxon>Bifidobacteriales</taxon>
        <taxon>Bifidobacteriaceae</taxon>
        <taxon>Bifidobacterium</taxon>
    </lineage>
</organism>